<gene>
    <name type="primary">GAPC</name>
    <name type="synonym">GAPDH</name>
</gene>
<proteinExistence type="evidence at transcript level"/>
<dbReference type="EC" id="1.2.1.12"/>
<dbReference type="EMBL" id="X60345">
    <property type="protein sequence ID" value="CAA42903.1"/>
    <property type="molecule type" value="mRNA"/>
</dbReference>
<dbReference type="PIR" id="S18486">
    <property type="entry name" value="DENDG"/>
</dbReference>
<dbReference type="SMR" id="P26521"/>
<dbReference type="UniPathway" id="UPA00109">
    <property type="reaction ID" value="UER00184"/>
</dbReference>
<dbReference type="GO" id="GO:0005829">
    <property type="term" value="C:cytosol"/>
    <property type="evidence" value="ECO:0007669"/>
    <property type="project" value="TreeGrafter"/>
</dbReference>
<dbReference type="GO" id="GO:0004365">
    <property type="term" value="F:glyceraldehyde-3-phosphate dehydrogenase (NAD+) (phosphorylating) activity"/>
    <property type="evidence" value="ECO:0007669"/>
    <property type="project" value="UniProtKB-EC"/>
</dbReference>
<dbReference type="GO" id="GO:0051287">
    <property type="term" value="F:NAD binding"/>
    <property type="evidence" value="ECO:0007669"/>
    <property type="project" value="InterPro"/>
</dbReference>
<dbReference type="GO" id="GO:0050661">
    <property type="term" value="F:NADP binding"/>
    <property type="evidence" value="ECO:0007669"/>
    <property type="project" value="InterPro"/>
</dbReference>
<dbReference type="GO" id="GO:0006006">
    <property type="term" value="P:glucose metabolic process"/>
    <property type="evidence" value="ECO:0007669"/>
    <property type="project" value="InterPro"/>
</dbReference>
<dbReference type="GO" id="GO:0006096">
    <property type="term" value="P:glycolytic process"/>
    <property type="evidence" value="ECO:0007669"/>
    <property type="project" value="UniProtKB-UniPathway"/>
</dbReference>
<dbReference type="CDD" id="cd18126">
    <property type="entry name" value="GAPDH_I_C"/>
    <property type="match status" value="1"/>
</dbReference>
<dbReference type="CDD" id="cd05214">
    <property type="entry name" value="GAPDH_I_N"/>
    <property type="match status" value="1"/>
</dbReference>
<dbReference type="FunFam" id="3.30.360.10:FF:000001">
    <property type="entry name" value="Glyceraldehyde-3-phosphate dehydrogenase"/>
    <property type="match status" value="1"/>
</dbReference>
<dbReference type="FunFam" id="3.40.50.720:FF:000020">
    <property type="entry name" value="Glyceraldehyde-3-phosphate dehydrogenase"/>
    <property type="match status" value="1"/>
</dbReference>
<dbReference type="Gene3D" id="3.30.360.10">
    <property type="entry name" value="Dihydrodipicolinate Reductase, domain 2"/>
    <property type="match status" value="1"/>
</dbReference>
<dbReference type="Gene3D" id="3.40.50.720">
    <property type="entry name" value="NAD(P)-binding Rossmann-like Domain"/>
    <property type="match status" value="1"/>
</dbReference>
<dbReference type="InterPro" id="IPR020831">
    <property type="entry name" value="GlycerAld/Erythrose_P_DH"/>
</dbReference>
<dbReference type="InterPro" id="IPR020830">
    <property type="entry name" value="GlycerAld_3-P_DH_AS"/>
</dbReference>
<dbReference type="InterPro" id="IPR020829">
    <property type="entry name" value="GlycerAld_3-P_DH_cat"/>
</dbReference>
<dbReference type="InterPro" id="IPR020828">
    <property type="entry name" value="GlycerAld_3-P_DH_NAD(P)-bd"/>
</dbReference>
<dbReference type="InterPro" id="IPR006424">
    <property type="entry name" value="Glyceraldehyde-3-P_DH_1"/>
</dbReference>
<dbReference type="InterPro" id="IPR036291">
    <property type="entry name" value="NAD(P)-bd_dom_sf"/>
</dbReference>
<dbReference type="NCBIfam" id="TIGR01534">
    <property type="entry name" value="GAPDH-I"/>
    <property type="match status" value="1"/>
</dbReference>
<dbReference type="PANTHER" id="PTHR10836">
    <property type="entry name" value="GLYCERALDEHYDE 3-PHOSPHATE DEHYDROGENASE"/>
    <property type="match status" value="1"/>
</dbReference>
<dbReference type="PANTHER" id="PTHR10836:SF112">
    <property type="entry name" value="GLYCERALDEHYDE-3-PHOSPHATE DEHYDROGENASE GAPC1, CYTOSOLIC-RELATED"/>
    <property type="match status" value="1"/>
</dbReference>
<dbReference type="Pfam" id="PF02800">
    <property type="entry name" value="Gp_dh_C"/>
    <property type="match status" value="1"/>
</dbReference>
<dbReference type="Pfam" id="PF00044">
    <property type="entry name" value="Gp_dh_N"/>
    <property type="match status" value="1"/>
</dbReference>
<dbReference type="PIRSF" id="PIRSF000149">
    <property type="entry name" value="GAP_DH"/>
    <property type="match status" value="1"/>
</dbReference>
<dbReference type="PRINTS" id="PR00078">
    <property type="entry name" value="G3PDHDRGNASE"/>
</dbReference>
<dbReference type="SMART" id="SM00846">
    <property type="entry name" value="Gp_dh_N"/>
    <property type="match status" value="1"/>
</dbReference>
<dbReference type="SUPFAM" id="SSF55347">
    <property type="entry name" value="Glyceraldehyde-3-phosphate dehydrogenase-like, C-terminal domain"/>
    <property type="match status" value="1"/>
</dbReference>
<dbReference type="SUPFAM" id="SSF51735">
    <property type="entry name" value="NAD(P)-binding Rossmann-fold domains"/>
    <property type="match status" value="1"/>
</dbReference>
<dbReference type="PROSITE" id="PS00071">
    <property type="entry name" value="GAPDH"/>
    <property type="match status" value="1"/>
</dbReference>
<feature type="chain" id="PRO_0000145616" description="Glyceraldehyde-3-phosphate dehydrogenase, cytosolic">
    <location>
        <begin position="1"/>
        <end position="338"/>
    </location>
</feature>
<feature type="active site" description="Nucleophile" evidence="2">
    <location>
        <position position="155"/>
    </location>
</feature>
<feature type="binding site" evidence="1">
    <location>
        <begin position="14"/>
        <end position="15"/>
    </location>
    <ligand>
        <name>NAD(+)</name>
        <dbReference type="ChEBI" id="CHEBI:57540"/>
    </ligand>
</feature>
<feature type="binding site" evidence="1">
    <location>
        <position position="36"/>
    </location>
    <ligand>
        <name>NAD(+)</name>
        <dbReference type="ChEBI" id="CHEBI:57540"/>
    </ligand>
</feature>
<feature type="binding site" evidence="1">
    <location>
        <position position="83"/>
    </location>
    <ligand>
        <name>NAD(+)</name>
        <dbReference type="ChEBI" id="CHEBI:57540"/>
    </ligand>
</feature>
<feature type="binding site" evidence="1">
    <location>
        <begin position="154"/>
        <end position="156"/>
    </location>
    <ligand>
        <name>D-glyceraldehyde 3-phosphate</name>
        <dbReference type="ChEBI" id="CHEBI:59776"/>
    </ligand>
</feature>
<feature type="binding site" evidence="1">
    <location>
        <position position="185"/>
    </location>
    <ligand>
        <name>D-glyceraldehyde 3-phosphate</name>
        <dbReference type="ChEBI" id="CHEBI:59776"/>
    </ligand>
</feature>
<feature type="binding site" evidence="1">
    <location>
        <begin position="214"/>
        <end position="215"/>
    </location>
    <ligand>
        <name>D-glyceraldehyde 3-phosphate</name>
        <dbReference type="ChEBI" id="CHEBI:59776"/>
    </ligand>
</feature>
<feature type="binding site" evidence="1">
    <location>
        <position position="237"/>
    </location>
    <ligand>
        <name>D-glyceraldehyde 3-phosphate</name>
        <dbReference type="ChEBI" id="CHEBI:59776"/>
    </ligand>
</feature>
<feature type="binding site" evidence="1">
    <location>
        <position position="319"/>
    </location>
    <ligand>
        <name>NAD(+)</name>
        <dbReference type="ChEBI" id="CHEBI:57540"/>
    </ligand>
</feature>
<feature type="site" description="Activates thiol group during catalysis" evidence="1">
    <location>
        <position position="182"/>
    </location>
</feature>
<keyword id="KW-0963">Cytoplasm</keyword>
<keyword id="KW-0324">Glycolysis</keyword>
<keyword id="KW-0520">NAD</keyword>
<keyword id="KW-0560">Oxidoreductase</keyword>
<accession>P26521</accession>
<protein>
    <recommendedName>
        <fullName>Glyceraldehyde-3-phosphate dehydrogenase, cytosolic</fullName>
        <ecNumber>1.2.1.12</ecNumber>
    </recommendedName>
</protein>
<comment type="function">
    <text evidence="1">Key enzyme in glycolysis that catalyzes the first step of the pathway by converting D-glyceraldehyde 3-phosphate (G3P) into 3-phospho-D-glyceroyl phosphate. Essential for the maintenance of cellular ATP levels and carbohydrate metabolism (By similarity).</text>
</comment>
<comment type="catalytic activity">
    <reaction evidence="2">
        <text>D-glyceraldehyde 3-phosphate + phosphate + NAD(+) = (2R)-3-phospho-glyceroyl phosphate + NADH + H(+)</text>
        <dbReference type="Rhea" id="RHEA:10300"/>
        <dbReference type="ChEBI" id="CHEBI:15378"/>
        <dbReference type="ChEBI" id="CHEBI:43474"/>
        <dbReference type="ChEBI" id="CHEBI:57540"/>
        <dbReference type="ChEBI" id="CHEBI:57604"/>
        <dbReference type="ChEBI" id="CHEBI:57945"/>
        <dbReference type="ChEBI" id="CHEBI:59776"/>
        <dbReference type="EC" id="1.2.1.12"/>
    </reaction>
</comment>
<comment type="pathway">
    <text>Carbohydrate degradation; glycolysis; pyruvate from D-glyceraldehyde 3-phosphate: step 1/5.</text>
</comment>
<comment type="subunit">
    <text evidence="1">Homotetramer.</text>
</comment>
<comment type="subcellular location">
    <subcellularLocation>
        <location evidence="1">Cytoplasm</location>
    </subcellularLocation>
</comment>
<comment type="miscellaneous">
    <text>Plants contain two types of GAPDH: cytosolic forms which participate in glycolysis and chloroplast forms which participate in photosynthesis. All the forms are encoded by distinct genes.</text>
</comment>
<comment type="similarity">
    <text evidence="3">Belongs to the glyceraldehyde-3-phosphate dehydrogenase family.</text>
</comment>
<reference key="1">
    <citation type="journal article" date="1989" name="Nature">
        <title>Molecular evidence for pre-Cretaceous angiosperm origins.</title>
        <authorList>
            <person name="Martin W."/>
            <person name="Gierl A."/>
            <person name="Saedler H."/>
        </authorList>
    </citation>
    <scope>NUCLEOTIDE SEQUENCE [MRNA]</scope>
</reference>
<sequence length="338" mass="36570">MTGKIKIGINGFGRIGRLVARVALARDDVELVAVNDPFITTDYMTYMFKYDTVHGQWKHHELKVKDEKTLLFGEKPVTVFGCRNPEEIPWGETGAEFVVESTGVFTTKEKASAHLKGGAKKVVISAPSADAPMFVVGVNHTEYKSDIDIVSNASCTTNCLAPLAKVINDRFGIVEGLMTTVHAMTATQKTVDGPSSKDWRGGRAASFNIIPSSTGAAKAVGKVLPALNGKLTGMAFRVPTVDVSVVGLTVRLEKKATYADIKAAIKEESEGKLKGILGYTEDDVVSTDFIGDNRSSIFDAKAGIALNDNCVKLVSWYDNEWGYSSRVVDLIVHMSKTQ</sequence>
<evidence type="ECO:0000250" key="1"/>
<evidence type="ECO:0000255" key="2">
    <source>
        <dbReference type="PROSITE-ProRule" id="PRU10009"/>
    </source>
</evidence>
<evidence type="ECO:0000305" key="3"/>
<name>G3PC_RANAC</name>
<organism>
    <name type="scientific">Ranunculus acris</name>
    <name type="common">Meadow buttercup</name>
    <dbReference type="NCBI Taxonomy" id="3447"/>
    <lineage>
        <taxon>Eukaryota</taxon>
        <taxon>Viridiplantae</taxon>
        <taxon>Streptophyta</taxon>
        <taxon>Embryophyta</taxon>
        <taxon>Tracheophyta</taxon>
        <taxon>Spermatophyta</taxon>
        <taxon>Magnoliopsida</taxon>
        <taxon>Ranunculales</taxon>
        <taxon>Ranunculaceae</taxon>
        <taxon>Ranunculoideae</taxon>
        <taxon>Ranunculeae</taxon>
        <taxon>Ranunculus</taxon>
    </lineage>
</organism>